<evidence type="ECO:0000255" key="1">
    <source>
        <dbReference type="PROSITE-ProRule" id="PRU01088"/>
    </source>
</evidence>
<evidence type="ECO:0000303" key="2">
    <source>
    </source>
</evidence>
<evidence type="ECO:0000305" key="3"/>
<gene>
    <name type="primary">JAL4</name>
    <name type="ordered locus">At1g33790</name>
    <name type="ORF">F14M2.9</name>
</gene>
<comment type="alternative products">
    <event type="alternative splicing"/>
    <isoform>
        <id>Q9LQ31-1</id>
        <name>1</name>
        <sequence type="displayed"/>
    </isoform>
    <isoform>
        <id>Q9LQ31-2</id>
        <name>2</name>
        <sequence type="described" ref="VSP_056712"/>
    </isoform>
    <isoform>
        <id>Q9LQ31-3</id>
        <name>3</name>
        <sequence type="described" ref="VSP_056713"/>
    </isoform>
</comment>
<comment type="similarity">
    <text evidence="1 3">Belongs to the jacalin lectin family.</text>
</comment>
<accession>Q9LQ31</accession>
<accession>F4HRA7</accession>
<accession>Q940R1</accession>
<protein>
    <recommendedName>
        <fullName>Jacalin-related lectin 4</fullName>
    </recommendedName>
</protein>
<sequence length="745" mass="81843">MAQKLEAKGGKGGNQWDDLLDHDNIAKIHVQGGHEGIQYVKFDYVKFDNLKIGQPKLGSIHGLSRKGFTQTFEIDPTSEYIVSVEGYYDESKGIIQALKFKTNKKTSDMIGYDENGLKFSLEVKGKAIIGFHGFADTNLNSLGAYFAPAPPTKFDYQGGSGAQLWDDGSNYNGVRKVSFSLDDTEIRQIRIEYDKSGLVEKREYGSNVGRQEEFVLDYPTEYIIYMEGTCDIVSDTSKNRVRSLMFKTSKGRTSPIFGKVAARKFVFESNGSALIGFHGRAAAAVDAIGAYFSPLILSAPAPPPPPAEKLQAKGGNGGNQWDDLADHDHVTKIYVQGGQEGIQYVKFDYVKNGQPQSGSVHGLLGRGFTQTFEIDPTNEHLVSVEGYYDESKGLVQGLKFKTNKKTSDMIGYDENGLKFSLEVNGKKIIGFHGYAQTYLNSLGAYFVTAPPTKFDYQGGSGAQLWDDGTNYNGVRKISFALDANEIRQIRIDYDKGGLIERREYGGNVGRQEEFVVDYPSEYIIYMEGTCDIVSDASKNRVRSLMFKTSKGRTSPIFGKVAARKFVFESNGSALIGFHGRAAAAVDAIGAYFSRFILPPSAETLQAKGGEGGDPWSDGVFNGVRNIYVGQGENGVSAVKFVYDKDSQVAEGNDHGKPTLLGYEEFKLEYPSEYITTVEGCFDKIFGSGGGVITMLKFKTNKRTSPPFGLETTSNFVLGKEGYKIVGFHGTSSHELHQLGVYVMPI</sequence>
<feature type="chain" id="PRO_0000430371" description="Jacalin-related lectin 4">
    <location>
        <begin position="1"/>
        <end position="745"/>
    </location>
</feature>
<feature type="domain" description="Jacalin-type lectin 1" evidence="1">
    <location>
        <begin position="2"/>
        <end position="148"/>
    </location>
</feature>
<feature type="domain" description="Jacalin-type lectin 2" evidence="1">
    <location>
        <begin position="151"/>
        <end position="294"/>
    </location>
</feature>
<feature type="domain" description="Jacalin-type lectin 3" evidence="1">
    <location>
        <begin position="307"/>
        <end position="448"/>
    </location>
</feature>
<feature type="domain" description="Jacalin-type lectin 4" evidence="1">
    <location>
        <begin position="451"/>
        <end position="594"/>
    </location>
</feature>
<feature type="domain" description="Jacalin-type lectin 5" evidence="1">
    <location>
        <begin position="601"/>
        <end position="744"/>
    </location>
</feature>
<feature type="splice variant" id="VSP_056712" description="In isoform 2." evidence="3">
    <location>
        <begin position="71"/>
        <end position="370"/>
    </location>
</feature>
<feature type="splice variant" id="VSP_056713" description="In isoform 3." evidence="2">
    <location>
        <begin position="98"/>
        <end position="397"/>
    </location>
</feature>
<feature type="sequence conflict" description="In Ref. 3; AAL06835." evidence="3" ref="3">
    <original>K</original>
    <variation>T</variation>
    <location>
        <position position="427"/>
    </location>
</feature>
<feature type="sequence conflict" description="In Ref. 3; AAL06835." evidence="3" ref="3">
    <original>Q</original>
    <variation>H</variation>
    <location>
        <position position="436"/>
    </location>
</feature>
<reference key="1">
    <citation type="journal article" date="2000" name="Nature">
        <title>Sequence and analysis of chromosome 1 of the plant Arabidopsis thaliana.</title>
        <authorList>
            <person name="Theologis A."/>
            <person name="Ecker J.R."/>
            <person name="Palm C.J."/>
            <person name="Federspiel N.A."/>
            <person name="Kaul S."/>
            <person name="White O."/>
            <person name="Alonso J."/>
            <person name="Altafi H."/>
            <person name="Araujo R."/>
            <person name="Bowman C.L."/>
            <person name="Brooks S.Y."/>
            <person name="Buehler E."/>
            <person name="Chan A."/>
            <person name="Chao Q."/>
            <person name="Chen H."/>
            <person name="Cheuk R.F."/>
            <person name="Chin C.W."/>
            <person name="Chung M.K."/>
            <person name="Conn L."/>
            <person name="Conway A.B."/>
            <person name="Conway A.R."/>
            <person name="Creasy T.H."/>
            <person name="Dewar K."/>
            <person name="Dunn P."/>
            <person name="Etgu P."/>
            <person name="Feldblyum T.V."/>
            <person name="Feng J.-D."/>
            <person name="Fong B."/>
            <person name="Fujii C.Y."/>
            <person name="Gill J.E."/>
            <person name="Goldsmith A.D."/>
            <person name="Haas B."/>
            <person name="Hansen N.F."/>
            <person name="Hughes B."/>
            <person name="Huizar L."/>
            <person name="Hunter J.L."/>
            <person name="Jenkins J."/>
            <person name="Johnson-Hopson C."/>
            <person name="Khan S."/>
            <person name="Khaykin E."/>
            <person name="Kim C.J."/>
            <person name="Koo H.L."/>
            <person name="Kremenetskaia I."/>
            <person name="Kurtz D.B."/>
            <person name="Kwan A."/>
            <person name="Lam B."/>
            <person name="Langin-Hooper S."/>
            <person name="Lee A."/>
            <person name="Lee J.M."/>
            <person name="Lenz C.A."/>
            <person name="Li J.H."/>
            <person name="Li Y.-P."/>
            <person name="Lin X."/>
            <person name="Liu S.X."/>
            <person name="Liu Z.A."/>
            <person name="Luros J.S."/>
            <person name="Maiti R."/>
            <person name="Marziali A."/>
            <person name="Militscher J."/>
            <person name="Miranda M."/>
            <person name="Nguyen M."/>
            <person name="Nierman W.C."/>
            <person name="Osborne B.I."/>
            <person name="Pai G."/>
            <person name="Peterson J."/>
            <person name="Pham P.K."/>
            <person name="Rizzo M."/>
            <person name="Rooney T."/>
            <person name="Rowley D."/>
            <person name="Sakano H."/>
            <person name="Salzberg S.L."/>
            <person name="Schwartz J.R."/>
            <person name="Shinn P."/>
            <person name="Southwick A.M."/>
            <person name="Sun H."/>
            <person name="Tallon L.J."/>
            <person name="Tambunga G."/>
            <person name="Toriumi M.J."/>
            <person name="Town C.D."/>
            <person name="Utterback T."/>
            <person name="Van Aken S."/>
            <person name="Vaysberg M."/>
            <person name="Vysotskaia V.S."/>
            <person name="Walker M."/>
            <person name="Wu D."/>
            <person name="Yu G."/>
            <person name="Fraser C.M."/>
            <person name="Venter J.C."/>
            <person name="Davis R.W."/>
        </authorList>
    </citation>
    <scope>NUCLEOTIDE SEQUENCE [LARGE SCALE GENOMIC DNA]</scope>
    <source>
        <strain>cv. Columbia</strain>
    </source>
</reference>
<reference key="2">
    <citation type="journal article" date="2017" name="Plant J.">
        <title>Araport11: a complete reannotation of the Arabidopsis thaliana reference genome.</title>
        <authorList>
            <person name="Cheng C.Y."/>
            <person name="Krishnakumar V."/>
            <person name="Chan A.P."/>
            <person name="Thibaud-Nissen F."/>
            <person name="Schobel S."/>
            <person name="Town C.D."/>
        </authorList>
    </citation>
    <scope>GENOME REANNOTATION</scope>
    <source>
        <strain>cv. Columbia</strain>
    </source>
</reference>
<reference key="3">
    <citation type="journal article" date="2003" name="Science">
        <title>Empirical analysis of transcriptional activity in the Arabidopsis genome.</title>
        <authorList>
            <person name="Yamada K."/>
            <person name="Lim J."/>
            <person name="Dale J.M."/>
            <person name="Chen H."/>
            <person name="Shinn P."/>
            <person name="Palm C.J."/>
            <person name="Southwick A.M."/>
            <person name="Wu H.C."/>
            <person name="Kim C.J."/>
            <person name="Nguyen M."/>
            <person name="Pham P.K."/>
            <person name="Cheuk R.F."/>
            <person name="Karlin-Newmann G."/>
            <person name="Liu S.X."/>
            <person name="Lam B."/>
            <person name="Sakano H."/>
            <person name="Wu T."/>
            <person name="Yu G."/>
            <person name="Miranda M."/>
            <person name="Quach H.L."/>
            <person name="Tripp M."/>
            <person name="Chang C.H."/>
            <person name="Lee J.M."/>
            <person name="Toriumi M.J."/>
            <person name="Chan M.M."/>
            <person name="Tang C.C."/>
            <person name="Onodera C.S."/>
            <person name="Deng J.M."/>
            <person name="Akiyama K."/>
            <person name="Ansari Y."/>
            <person name="Arakawa T."/>
            <person name="Banh J."/>
            <person name="Banno F."/>
            <person name="Bowser L."/>
            <person name="Brooks S.Y."/>
            <person name="Carninci P."/>
            <person name="Chao Q."/>
            <person name="Choy N."/>
            <person name="Enju A."/>
            <person name="Goldsmith A.D."/>
            <person name="Gurjal M."/>
            <person name="Hansen N.F."/>
            <person name="Hayashizaki Y."/>
            <person name="Johnson-Hopson C."/>
            <person name="Hsuan V.W."/>
            <person name="Iida K."/>
            <person name="Karnes M."/>
            <person name="Khan S."/>
            <person name="Koesema E."/>
            <person name="Ishida J."/>
            <person name="Jiang P.X."/>
            <person name="Jones T."/>
            <person name="Kawai J."/>
            <person name="Kamiya A."/>
            <person name="Meyers C."/>
            <person name="Nakajima M."/>
            <person name="Narusaka M."/>
            <person name="Seki M."/>
            <person name="Sakurai T."/>
            <person name="Satou M."/>
            <person name="Tamse R."/>
            <person name="Vaysberg M."/>
            <person name="Wallender E.K."/>
            <person name="Wong C."/>
            <person name="Yamamura Y."/>
            <person name="Yuan S."/>
            <person name="Shinozaki K."/>
            <person name="Davis R.W."/>
            <person name="Theologis A."/>
            <person name="Ecker J.R."/>
        </authorList>
    </citation>
    <scope>NUCLEOTIDE SEQUENCE [LARGE SCALE MRNA] (ISOFORM 3)</scope>
    <source>
        <strain>cv. Columbia</strain>
    </source>
</reference>
<reference key="4">
    <citation type="journal article" date="2008" name="Plant Cell Physiol.">
        <title>Antagonistic jacalin-related lectins regulate the size of ER body-type beta-glucosidase complexes in Arabidopsis thaliana.</title>
        <authorList>
            <person name="Nagano A.J."/>
            <person name="Fukao Y."/>
            <person name="Fujiwara M."/>
            <person name="Nishimura M."/>
            <person name="Hara-Nishimura I."/>
        </authorList>
    </citation>
    <scope>GENE FAMILY</scope>
    <scope>NOMENCLATURE</scope>
</reference>
<keyword id="KW-0025">Alternative splicing</keyword>
<keyword id="KW-0430">Lectin</keyword>
<keyword id="KW-1185">Reference proteome</keyword>
<keyword id="KW-0677">Repeat</keyword>
<name>JAL4_ARATH</name>
<proteinExistence type="evidence at transcript level"/>
<organism>
    <name type="scientific">Arabidopsis thaliana</name>
    <name type="common">Mouse-ear cress</name>
    <dbReference type="NCBI Taxonomy" id="3702"/>
    <lineage>
        <taxon>Eukaryota</taxon>
        <taxon>Viridiplantae</taxon>
        <taxon>Streptophyta</taxon>
        <taxon>Embryophyta</taxon>
        <taxon>Tracheophyta</taxon>
        <taxon>Spermatophyta</taxon>
        <taxon>Magnoliopsida</taxon>
        <taxon>eudicotyledons</taxon>
        <taxon>Gunneridae</taxon>
        <taxon>Pentapetalae</taxon>
        <taxon>rosids</taxon>
        <taxon>malvids</taxon>
        <taxon>Brassicales</taxon>
        <taxon>Brassicaceae</taxon>
        <taxon>Camelineae</taxon>
        <taxon>Arabidopsis</taxon>
    </lineage>
</organism>
<dbReference type="EMBL" id="AC010164">
    <property type="protein sequence ID" value="AAF97293.1"/>
    <property type="molecule type" value="Genomic_DNA"/>
</dbReference>
<dbReference type="EMBL" id="CP002684">
    <property type="protein sequence ID" value="AEE31624.1"/>
    <property type="molecule type" value="Genomic_DNA"/>
</dbReference>
<dbReference type="EMBL" id="CP002684">
    <property type="protein sequence ID" value="AEE31625.1"/>
    <property type="molecule type" value="Genomic_DNA"/>
</dbReference>
<dbReference type="EMBL" id="AY054174">
    <property type="protein sequence ID" value="AAL06835.1"/>
    <property type="molecule type" value="mRNA"/>
</dbReference>
<dbReference type="PIR" id="D86461">
    <property type="entry name" value="D86461"/>
</dbReference>
<dbReference type="RefSeq" id="NP_001154390.2">
    <molecule id="Q9LQ31-1"/>
    <property type="nucleotide sequence ID" value="NM_001160918.3"/>
</dbReference>
<dbReference type="RefSeq" id="NP_564427.1">
    <molecule id="Q9LQ31-2"/>
    <property type="nucleotide sequence ID" value="NM_103098.2"/>
</dbReference>
<dbReference type="SMR" id="Q9LQ31"/>
<dbReference type="BioGRID" id="25503">
    <property type="interactions" value="1"/>
</dbReference>
<dbReference type="FunCoup" id="Q9LQ31">
    <property type="interactions" value="2"/>
</dbReference>
<dbReference type="PaxDb" id="3702-AT1G33790.2"/>
<dbReference type="ProteomicsDB" id="238982">
    <molecule id="Q9LQ31-1"/>
</dbReference>
<dbReference type="EnsemblPlants" id="AT1G33790.1">
    <molecule id="Q9LQ31-2"/>
    <property type="protein sequence ID" value="AT1G33790.1"/>
    <property type="gene ID" value="AT1G33790"/>
</dbReference>
<dbReference type="EnsemblPlants" id="AT1G33790.2">
    <molecule id="Q9LQ31-1"/>
    <property type="protein sequence ID" value="AT1G33790.2"/>
    <property type="gene ID" value="AT1G33790"/>
</dbReference>
<dbReference type="GeneID" id="840271"/>
<dbReference type="Gramene" id="AT1G33790.1">
    <molecule id="Q9LQ31-2"/>
    <property type="protein sequence ID" value="AT1G33790.1"/>
    <property type="gene ID" value="AT1G33790"/>
</dbReference>
<dbReference type="Gramene" id="AT1G33790.2">
    <molecule id="Q9LQ31-1"/>
    <property type="protein sequence ID" value="AT1G33790.2"/>
    <property type="gene ID" value="AT1G33790"/>
</dbReference>
<dbReference type="KEGG" id="ath:AT1G33790"/>
<dbReference type="Araport" id="AT1G33790"/>
<dbReference type="TAIR" id="AT1G33790"/>
<dbReference type="eggNOG" id="ENOG502SDKK">
    <property type="taxonomic scope" value="Eukaryota"/>
</dbReference>
<dbReference type="HOGENOM" id="CLU_334441_0_0_1"/>
<dbReference type="InParanoid" id="Q9LQ31"/>
<dbReference type="OMA" id="TSHELHQ"/>
<dbReference type="PhylomeDB" id="Q9LQ31"/>
<dbReference type="PRO" id="PR:Q9LQ31"/>
<dbReference type="Proteomes" id="UP000006548">
    <property type="component" value="Chromosome 1"/>
</dbReference>
<dbReference type="ExpressionAtlas" id="Q9LQ31">
    <property type="expression patterns" value="baseline and differential"/>
</dbReference>
<dbReference type="GO" id="GO:0030246">
    <property type="term" value="F:carbohydrate binding"/>
    <property type="evidence" value="ECO:0007669"/>
    <property type="project" value="UniProtKB-KW"/>
</dbReference>
<dbReference type="CDD" id="cd09612">
    <property type="entry name" value="Jacalin"/>
    <property type="match status" value="5"/>
</dbReference>
<dbReference type="FunFam" id="2.100.10.30:FF:000001">
    <property type="entry name" value="Jacalin-related lectin 33"/>
    <property type="match status" value="5"/>
</dbReference>
<dbReference type="Gene3D" id="2.100.10.30">
    <property type="entry name" value="Jacalin-like lectin domain"/>
    <property type="match status" value="5"/>
</dbReference>
<dbReference type="InterPro" id="IPR001229">
    <property type="entry name" value="Jacalin-like_lectin_dom"/>
</dbReference>
<dbReference type="InterPro" id="IPR033734">
    <property type="entry name" value="Jacalin-like_lectin_dom_plant"/>
</dbReference>
<dbReference type="InterPro" id="IPR036404">
    <property type="entry name" value="Jacalin-like_lectin_dom_sf"/>
</dbReference>
<dbReference type="PANTHER" id="PTHR47293:SF66">
    <property type="entry name" value="JACALIN-RELATED LECTIN 11-RELATED"/>
    <property type="match status" value="1"/>
</dbReference>
<dbReference type="PANTHER" id="PTHR47293">
    <property type="entry name" value="JACALIN-RELATED LECTIN 3"/>
    <property type="match status" value="1"/>
</dbReference>
<dbReference type="Pfam" id="PF01419">
    <property type="entry name" value="Jacalin"/>
    <property type="match status" value="5"/>
</dbReference>
<dbReference type="SMART" id="SM00915">
    <property type="entry name" value="Jacalin"/>
    <property type="match status" value="5"/>
</dbReference>
<dbReference type="SUPFAM" id="SSF51101">
    <property type="entry name" value="Mannose-binding lectins"/>
    <property type="match status" value="5"/>
</dbReference>
<dbReference type="PROSITE" id="PS51752">
    <property type="entry name" value="JACALIN_LECTIN"/>
    <property type="match status" value="5"/>
</dbReference>